<evidence type="ECO:0000255" key="1"/>
<evidence type="ECO:0000256" key="2">
    <source>
        <dbReference type="SAM" id="MobiDB-lite"/>
    </source>
</evidence>
<evidence type="ECO:0000269" key="3">
    <source>
    </source>
</evidence>
<evidence type="ECO:0000269" key="4">
    <source>
    </source>
</evidence>
<evidence type="ECO:0000269" key="5">
    <source>
    </source>
</evidence>
<evidence type="ECO:0000305" key="6"/>
<evidence type="ECO:0007744" key="7">
    <source>
    </source>
</evidence>
<organism>
    <name type="scientific">Arabidopsis thaliana</name>
    <name type="common">Mouse-ear cress</name>
    <dbReference type="NCBI Taxonomy" id="3702"/>
    <lineage>
        <taxon>Eukaryota</taxon>
        <taxon>Viridiplantae</taxon>
        <taxon>Streptophyta</taxon>
        <taxon>Embryophyta</taxon>
        <taxon>Tracheophyta</taxon>
        <taxon>Spermatophyta</taxon>
        <taxon>Magnoliopsida</taxon>
        <taxon>eudicotyledons</taxon>
        <taxon>Gunneridae</taxon>
        <taxon>Pentapetalae</taxon>
        <taxon>rosids</taxon>
        <taxon>malvids</taxon>
        <taxon>Brassicales</taxon>
        <taxon>Brassicaceae</taxon>
        <taxon>Camelineae</taxon>
        <taxon>Arabidopsis</taxon>
    </lineage>
</organism>
<gene>
    <name type="primary">MED8</name>
    <name type="synonym">MED8_1</name>
    <name type="synonym">SETH10</name>
    <name type="ordered locus">At2g03070</name>
    <name type="ORF">T17M13.24</name>
</gene>
<sequence>METQPQQPPPPPVAEKLNPKLEKELNLESLKTRAVSLAKAIARILEDFDAYGRTNTTPKWQDILGQYSMVNLELFNIVEEVKRVSNAFVVLPKNVNAMNAAILPVMLSSKLLPEMETDDNAKREQLLQGVQSLPIPMQIERLKARMDMIAAACENAERVLADTRKAYGFGTRQGPSMLPTMDKGQAAKIQEQEKMLRDAVNDGKGTQLPPDQRQITTALPPHLADVLIINDAGKIALPGQSNNINNQGMMQVSGTQFVGRSAASPSGPNFDNTTSPLPYSNSPRATGMVNVPSPQHQIQQQQFQQQQQRSKLMQLPQHQQQQLLAQQQQQLRQSSMQGLGQSQIPALHDMHGQAQQKFQTSHGQHQMPYSQPMGAHQQFQARQLSGGHIQHSMSQGQLNPAMNRHLNQFSGGANSALFTSAQGSPSSQMIPNMSSMQSQTLVPRMQQFGVSGTNPQRSHSSQMLGDQMFNTSGMMQTQQTQIQQSQQQQQQQQQGGYGNMQTNQQSLQPNNMMQNAQQRHQNPQ</sequence>
<keyword id="KW-0007">Acetylation</keyword>
<keyword id="KW-0175">Coiled coil</keyword>
<keyword id="KW-0539">Nucleus</keyword>
<keyword id="KW-1185">Reference proteome</keyword>
<keyword id="KW-0804">Transcription</keyword>
<keyword id="KW-0805">Transcription regulation</keyword>
<comment type="function">
    <text evidence="3 5">Component of the Mediator complex, a coactivator involved in the regulated transcription of nearly all RNA polymerase II-dependent genes. Mediator functions as a bridge to convey information from gene-specific regulatory proteins to the basal RNA polymerase II transcription machinery. The Mediator complex, having a compact conformation in its free form, is recruited to promoters by direct interactions with regulatory proteins and serves for the assembly of a functional preinitiation complex with RNA polymerase II and the general transcription factors. Regulator of both plant defense and flowering time. Involved in pollen tube growth.</text>
</comment>
<comment type="subunit">
    <text evidence="4">Component of the Mediator complex.</text>
</comment>
<comment type="subcellular location">
    <subcellularLocation>
        <location evidence="6">Nucleus</location>
    </subcellularLocation>
</comment>
<comment type="disruption phenotype">
    <text evidence="5">Increased number of leaves and shorter petioles under vegetative conditions. Late-flowering phenotype when grown under both long-day and short-day conditions. Increased sensitivity to necrotrophic pathogens.</text>
</comment>
<comment type="miscellaneous">
    <text>Named seth after the brother and murderer of the Egyptian fertility god Osiris.</text>
</comment>
<comment type="similarity">
    <text evidence="6">Belongs to the Mediator complex subunit 8 family.</text>
</comment>
<comment type="sequence caution" evidence="6">
    <conflict type="erroneous gene model prediction">
        <sequence resource="EMBL-CDS" id="AAC32925"/>
    </conflict>
</comment>
<accession>Q4V3C1</accession>
<accession>O80620</accession>
<proteinExistence type="evidence at protein level"/>
<protein>
    <recommendedName>
        <fullName>Mediator of RNA polymerase II transcription subunit 8</fullName>
    </recommendedName>
    <alternativeName>
        <fullName>Protein SETH 10</fullName>
    </alternativeName>
</protein>
<dbReference type="EMBL" id="AC004138">
    <property type="protein sequence ID" value="AAC32925.1"/>
    <property type="status" value="ALT_SEQ"/>
    <property type="molecule type" value="Genomic_DNA"/>
</dbReference>
<dbReference type="EMBL" id="CP002685">
    <property type="protein sequence ID" value="AEC05662.1"/>
    <property type="molecule type" value="Genomic_DNA"/>
</dbReference>
<dbReference type="EMBL" id="BT023435">
    <property type="protein sequence ID" value="AAY56426.1"/>
    <property type="molecule type" value="mRNA"/>
</dbReference>
<dbReference type="EMBL" id="AK229348">
    <property type="protein sequence ID" value="BAF01211.1"/>
    <property type="molecule type" value="mRNA"/>
</dbReference>
<dbReference type="PIR" id="A84444">
    <property type="entry name" value="A84444"/>
</dbReference>
<dbReference type="RefSeq" id="NP_178407.2">
    <property type="nucleotide sequence ID" value="NM_126359.4"/>
</dbReference>
<dbReference type="BioGRID" id="238">
    <property type="interactions" value="11"/>
</dbReference>
<dbReference type="FunCoup" id="Q4V3C1">
    <property type="interactions" value="1795"/>
</dbReference>
<dbReference type="IntAct" id="Q4V3C1">
    <property type="interactions" value="1"/>
</dbReference>
<dbReference type="STRING" id="3702.Q4V3C1"/>
<dbReference type="GlyGen" id="Q4V3C1">
    <property type="glycosylation" value="2 sites, 1 O-linked glycan (2 sites)"/>
</dbReference>
<dbReference type="iPTMnet" id="Q4V3C1"/>
<dbReference type="PaxDb" id="3702-AT2G03070.1"/>
<dbReference type="ProteomicsDB" id="228827"/>
<dbReference type="EnsemblPlants" id="AT2G03070.1">
    <property type="protein sequence ID" value="AT2G03070.1"/>
    <property type="gene ID" value="AT2G03070"/>
</dbReference>
<dbReference type="GeneID" id="814836"/>
<dbReference type="Gramene" id="AT2G03070.1">
    <property type="protein sequence ID" value="AT2G03070.1"/>
    <property type="gene ID" value="AT2G03070"/>
</dbReference>
<dbReference type="KEGG" id="ath:AT2G03070"/>
<dbReference type="Araport" id="AT2G03070"/>
<dbReference type="TAIR" id="AT2G03070">
    <property type="gene designation" value="MED8"/>
</dbReference>
<dbReference type="eggNOG" id="ENOG502QTT9">
    <property type="taxonomic scope" value="Eukaryota"/>
</dbReference>
<dbReference type="HOGENOM" id="CLU_037260_0_0_1"/>
<dbReference type="InParanoid" id="Q4V3C1"/>
<dbReference type="OMA" id="GYGNMQT"/>
<dbReference type="PhylomeDB" id="Q4V3C1"/>
<dbReference type="CD-CODE" id="4299E36E">
    <property type="entry name" value="Nucleolus"/>
</dbReference>
<dbReference type="PRO" id="PR:Q4V3C1"/>
<dbReference type="Proteomes" id="UP000006548">
    <property type="component" value="Chromosome 2"/>
</dbReference>
<dbReference type="ExpressionAtlas" id="Q4V3C1">
    <property type="expression patterns" value="baseline and differential"/>
</dbReference>
<dbReference type="GO" id="GO:0016592">
    <property type="term" value="C:mediator complex"/>
    <property type="evidence" value="ECO:0000314"/>
    <property type="project" value="UniProtKB"/>
</dbReference>
<dbReference type="GO" id="GO:0050832">
    <property type="term" value="P:defense response to fungus"/>
    <property type="evidence" value="ECO:0000315"/>
    <property type="project" value="TAIR"/>
</dbReference>
<dbReference type="GO" id="GO:0009909">
    <property type="term" value="P:regulation of flower development"/>
    <property type="evidence" value="ECO:0000315"/>
    <property type="project" value="TAIR"/>
</dbReference>
<dbReference type="InterPro" id="IPR038795">
    <property type="entry name" value="MED8_plant"/>
</dbReference>
<dbReference type="PANTHER" id="PTHR35552">
    <property type="entry name" value="MEDIATOR OF RNA POLYMERASE II TRANSCRIPTION SUBUNIT 8"/>
    <property type="match status" value="1"/>
</dbReference>
<dbReference type="PANTHER" id="PTHR35552:SF1">
    <property type="entry name" value="MEDIATOR OF RNA POLYMERASE II TRANSCRIPTION SUBUNIT 8"/>
    <property type="match status" value="1"/>
</dbReference>
<name>MED8_ARATH</name>
<reference key="1">
    <citation type="journal article" date="1999" name="Nature">
        <title>Sequence and analysis of chromosome 2 of the plant Arabidopsis thaliana.</title>
        <authorList>
            <person name="Lin X."/>
            <person name="Kaul S."/>
            <person name="Rounsley S.D."/>
            <person name="Shea T.P."/>
            <person name="Benito M.-I."/>
            <person name="Town C.D."/>
            <person name="Fujii C.Y."/>
            <person name="Mason T.M."/>
            <person name="Bowman C.L."/>
            <person name="Barnstead M.E."/>
            <person name="Feldblyum T.V."/>
            <person name="Buell C.R."/>
            <person name="Ketchum K.A."/>
            <person name="Lee J.J."/>
            <person name="Ronning C.M."/>
            <person name="Koo H.L."/>
            <person name="Moffat K.S."/>
            <person name="Cronin L.A."/>
            <person name="Shen M."/>
            <person name="Pai G."/>
            <person name="Van Aken S."/>
            <person name="Umayam L."/>
            <person name="Tallon L.J."/>
            <person name="Gill J.E."/>
            <person name="Adams M.D."/>
            <person name="Carrera A.J."/>
            <person name="Creasy T.H."/>
            <person name="Goodman H.M."/>
            <person name="Somerville C.R."/>
            <person name="Copenhaver G.P."/>
            <person name="Preuss D."/>
            <person name="Nierman W.C."/>
            <person name="White O."/>
            <person name="Eisen J.A."/>
            <person name="Salzberg S.L."/>
            <person name="Fraser C.M."/>
            <person name="Venter J.C."/>
        </authorList>
    </citation>
    <scope>NUCLEOTIDE SEQUENCE [LARGE SCALE GENOMIC DNA]</scope>
    <source>
        <strain>cv. Columbia</strain>
    </source>
</reference>
<reference key="2">
    <citation type="journal article" date="2017" name="Plant J.">
        <title>Araport11: a complete reannotation of the Arabidopsis thaliana reference genome.</title>
        <authorList>
            <person name="Cheng C.Y."/>
            <person name="Krishnakumar V."/>
            <person name="Chan A.P."/>
            <person name="Thibaud-Nissen F."/>
            <person name="Schobel S."/>
            <person name="Town C.D."/>
        </authorList>
    </citation>
    <scope>GENOME REANNOTATION</scope>
    <source>
        <strain>cv. Columbia</strain>
    </source>
</reference>
<reference key="3">
    <citation type="submission" date="2005-05" db="EMBL/GenBank/DDBJ databases">
        <title>Arabidopsis ORF clones.</title>
        <authorList>
            <person name="Cheuk R."/>
            <person name="Chen H."/>
            <person name="Kim C.J."/>
            <person name="Shinn P."/>
            <person name="Ecker J.R."/>
        </authorList>
    </citation>
    <scope>NUCLEOTIDE SEQUENCE [LARGE SCALE MRNA]</scope>
</reference>
<reference key="4">
    <citation type="submission" date="2006-07" db="EMBL/GenBank/DDBJ databases">
        <title>Large-scale analysis of RIKEN Arabidopsis full-length (RAFL) cDNAs.</title>
        <authorList>
            <person name="Totoki Y."/>
            <person name="Seki M."/>
            <person name="Ishida J."/>
            <person name="Nakajima M."/>
            <person name="Enju A."/>
            <person name="Kamiya A."/>
            <person name="Narusaka M."/>
            <person name="Shin-i T."/>
            <person name="Nakagawa M."/>
            <person name="Sakamoto N."/>
            <person name="Oishi K."/>
            <person name="Kohara Y."/>
            <person name="Kobayashi M."/>
            <person name="Toyoda A."/>
            <person name="Sakaki Y."/>
            <person name="Sakurai T."/>
            <person name="Iida K."/>
            <person name="Akiyama K."/>
            <person name="Satou M."/>
            <person name="Toyoda T."/>
            <person name="Konagaya A."/>
            <person name="Carninci P."/>
            <person name="Kawai J."/>
            <person name="Hayashizaki Y."/>
            <person name="Shinozaki K."/>
        </authorList>
    </citation>
    <scope>NUCLEOTIDE SEQUENCE [LARGE SCALE MRNA]</scope>
    <source>
        <strain>cv. Columbia</strain>
    </source>
</reference>
<reference key="5">
    <citation type="journal article" date="2004" name="Genetics">
        <title>Analysis of transposon insertion mutants highlights the diversity of mechanisms underlying male progamic development in Arabidopsis.</title>
        <authorList>
            <person name="Lalanne E."/>
            <person name="Michaelidis C."/>
            <person name="Moore J.M."/>
            <person name="Gagliano W."/>
            <person name="Johnson A."/>
            <person name="Patel R."/>
            <person name="Howden R."/>
            <person name="Vielle-Calzada J.P."/>
            <person name="Grossniklaus U."/>
            <person name="Twell D."/>
        </authorList>
    </citation>
    <scope>FUNCTION</scope>
</reference>
<reference key="6">
    <citation type="journal article" date="2007" name="Mol. Cell">
        <title>Purification of a plant mediator from Arabidopsis thaliana identifies PFT1 as the Med25 subunit.</title>
        <authorList>
            <person name="Baeckstroem S."/>
            <person name="Elfving N."/>
            <person name="Nilsson R."/>
            <person name="Wingsle G."/>
            <person name="Bjoerklund S."/>
        </authorList>
    </citation>
    <scope>IDENTIFICATION BY MASS SPECTROMETRY</scope>
    <scope>SUBUNIT</scope>
    <scope>NOMENCLATURE</scope>
</reference>
<reference key="7">
    <citation type="journal article" date="2009" name="Plant Cell">
        <title>The mediator complex subunit PFT1 is a key regulator of jasmonate-dependent defense in Arabidopsis.</title>
        <authorList>
            <person name="Kidd B.N."/>
            <person name="Edgar C.I."/>
            <person name="Kumar K.K."/>
            <person name="Aitken E.A."/>
            <person name="Schenk P.M."/>
            <person name="Manners J.M."/>
            <person name="Kazan K."/>
        </authorList>
    </citation>
    <scope>FUNCTION</scope>
    <scope>DISRUPTION PHENOTYPE</scope>
</reference>
<reference key="8">
    <citation type="journal article" date="2011" name="Plant Physiol.">
        <title>The Mediator complex in plants: structure, phylogeny, and expression profiling of representative genes in a dicot (Arabidopsis) and a monocot (rice) during reproduction and abiotic stress.</title>
        <authorList>
            <person name="Mathur S."/>
            <person name="Vyas S."/>
            <person name="Kapoor S."/>
            <person name="Tyagi A.K."/>
        </authorList>
    </citation>
    <scope>IDENTIFICATION</scope>
    <scope>NOMENCLATURE</scope>
</reference>
<reference key="9">
    <citation type="journal article" date="2012" name="Mol. Cell. Proteomics">
        <title>Comparative large-scale characterisation of plant vs. mammal proteins reveals similar and idiosyncratic N-alpha acetylation features.</title>
        <authorList>
            <person name="Bienvenut W.V."/>
            <person name="Sumpton D."/>
            <person name="Martinez A."/>
            <person name="Lilla S."/>
            <person name="Espagne C."/>
            <person name="Meinnel T."/>
            <person name="Giglione C."/>
        </authorList>
    </citation>
    <scope>ACETYLATION [LARGE SCALE ANALYSIS] AT MET-1</scope>
    <scope>IDENTIFICATION BY MASS SPECTROMETRY [LARGE SCALE ANALYSIS]</scope>
</reference>
<feature type="chain" id="PRO_0000418346" description="Mediator of RNA polymerase II transcription subunit 8">
    <location>
        <begin position="1"/>
        <end position="524"/>
    </location>
</feature>
<feature type="region of interest" description="Disordered" evidence="2">
    <location>
        <begin position="291"/>
        <end position="315"/>
    </location>
</feature>
<feature type="region of interest" description="Disordered" evidence="2">
    <location>
        <begin position="474"/>
        <end position="524"/>
    </location>
</feature>
<feature type="coiled-coil region" evidence="1">
    <location>
        <begin position="137"/>
        <end position="162"/>
    </location>
</feature>
<feature type="compositionally biased region" description="Low complexity" evidence="2">
    <location>
        <begin position="295"/>
        <end position="315"/>
    </location>
</feature>
<feature type="compositionally biased region" description="Low complexity" evidence="2">
    <location>
        <begin position="474"/>
        <end position="505"/>
    </location>
</feature>
<feature type="compositionally biased region" description="Polar residues" evidence="2">
    <location>
        <begin position="506"/>
        <end position="524"/>
    </location>
</feature>
<feature type="modified residue" description="N-acetylmethionine" evidence="7">
    <location>
        <position position="1"/>
    </location>
</feature>